<organism>
    <name type="scientific">Nitratidesulfovibrio vulgaris (strain ATCC 29579 / DSM 644 / CCUG 34227 / NCIMB 8303 / VKM B-1760 / Hildenborough)</name>
    <name type="common">Desulfovibrio vulgaris</name>
    <dbReference type="NCBI Taxonomy" id="882"/>
    <lineage>
        <taxon>Bacteria</taxon>
        <taxon>Pseudomonadati</taxon>
        <taxon>Thermodesulfobacteriota</taxon>
        <taxon>Desulfovibrionia</taxon>
        <taxon>Desulfovibrionales</taxon>
        <taxon>Desulfovibrionaceae</taxon>
        <taxon>Nitratidesulfovibrio</taxon>
    </lineage>
</organism>
<keyword id="KW-0227">DNA damage</keyword>
<keyword id="KW-0233">DNA recombination</keyword>
<keyword id="KW-0234">DNA repair</keyword>
<keyword id="KW-1185">Reference proteome</keyword>
<feature type="chain" id="PRO_1000193372" description="DNA repair protein RecO">
    <location>
        <begin position="1"/>
        <end position="251"/>
    </location>
</feature>
<dbReference type="EMBL" id="AE017285">
    <property type="protein sequence ID" value="AAS96375.1"/>
    <property type="molecule type" value="Genomic_DNA"/>
</dbReference>
<dbReference type="RefSeq" id="WP_010939185.1">
    <property type="nucleotide sequence ID" value="NC_002937.3"/>
</dbReference>
<dbReference type="RefSeq" id="YP_011116.1">
    <property type="nucleotide sequence ID" value="NC_002937.3"/>
</dbReference>
<dbReference type="SMR" id="Q72AU1"/>
<dbReference type="STRING" id="882.DVU_1899"/>
<dbReference type="PaxDb" id="882-DVU_1899"/>
<dbReference type="EnsemblBacteria" id="AAS96375">
    <property type="protein sequence ID" value="AAS96375"/>
    <property type="gene ID" value="DVU_1899"/>
</dbReference>
<dbReference type="KEGG" id="dvu:DVU_1899"/>
<dbReference type="PATRIC" id="fig|882.5.peg.1742"/>
<dbReference type="eggNOG" id="COG1381">
    <property type="taxonomic scope" value="Bacteria"/>
</dbReference>
<dbReference type="HOGENOM" id="CLU_066632_2_1_7"/>
<dbReference type="OrthoDB" id="9780797at2"/>
<dbReference type="Proteomes" id="UP000002194">
    <property type="component" value="Chromosome"/>
</dbReference>
<dbReference type="GO" id="GO:0043590">
    <property type="term" value="C:bacterial nucleoid"/>
    <property type="evidence" value="ECO:0007669"/>
    <property type="project" value="TreeGrafter"/>
</dbReference>
<dbReference type="GO" id="GO:0006310">
    <property type="term" value="P:DNA recombination"/>
    <property type="evidence" value="ECO:0007669"/>
    <property type="project" value="UniProtKB-UniRule"/>
</dbReference>
<dbReference type="GO" id="GO:0006302">
    <property type="term" value="P:double-strand break repair"/>
    <property type="evidence" value="ECO:0007669"/>
    <property type="project" value="TreeGrafter"/>
</dbReference>
<dbReference type="Gene3D" id="2.40.50.140">
    <property type="entry name" value="Nucleic acid-binding proteins"/>
    <property type="match status" value="1"/>
</dbReference>
<dbReference type="Gene3D" id="1.20.1440.120">
    <property type="entry name" value="Recombination protein O, C-terminal domain"/>
    <property type="match status" value="1"/>
</dbReference>
<dbReference type="Gene3D" id="6.20.220.20">
    <property type="entry name" value="Recombination protein O, zinc-binding domain"/>
    <property type="match status" value="1"/>
</dbReference>
<dbReference type="HAMAP" id="MF_00201">
    <property type="entry name" value="RecO"/>
    <property type="match status" value="1"/>
</dbReference>
<dbReference type="InterPro" id="IPR037278">
    <property type="entry name" value="ARFGAP/RecO"/>
</dbReference>
<dbReference type="InterPro" id="IPR022572">
    <property type="entry name" value="DNA_rep/recomb_RecO_N"/>
</dbReference>
<dbReference type="InterPro" id="IPR012340">
    <property type="entry name" value="NA-bd_OB-fold"/>
</dbReference>
<dbReference type="InterPro" id="IPR003717">
    <property type="entry name" value="RecO"/>
</dbReference>
<dbReference type="InterPro" id="IPR042242">
    <property type="entry name" value="RecO_C"/>
</dbReference>
<dbReference type="NCBIfam" id="TIGR00613">
    <property type="entry name" value="reco"/>
    <property type="match status" value="1"/>
</dbReference>
<dbReference type="PANTHER" id="PTHR33991">
    <property type="entry name" value="DNA REPAIR PROTEIN RECO"/>
    <property type="match status" value="1"/>
</dbReference>
<dbReference type="PANTHER" id="PTHR33991:SF1">
    <property type="entry name" value="DNA REPAIR PROTEIN RECO"/>
    <property type="match status" value="1"/>
</dbReference>
<dbReference type="Pfam" id="PF02565">
    <property type="entry name" value="RecO_C"/>
    <property type="match status" value="1"/>
</dbReference>
<dbReference type="Pfam" id="PF11967">
    <property type="entry name" value="RecO_N"/>
    <property type="match status" value="1"/>
</dbReference>
<dbReference type="SUPFAM" id="SSF57863">
    <property type="entry name" value="ArfGap/RecO-like zinc finger"/>
    <property type="match status" value="1"/>
</dbReference>
<dbReference type="SUPFAM" id="SSF50249">
    <property type="entry name" value="Nucleic acid-binding proteins"/>
    <property type="match status" value="1"/>
</dbReference>
<protein>
    <recommendedName>
        <fullName evidence="1">DNA repair protein RecO</fullName>
    </recommendedName>
    <alternativeName>
        <fullName evidence="1">Recombination protein O</fullName>
    </alternativeName>
</protein>
<name>RECO_NITV2</name>
<comment type="function">
    <text evidence="1">Involved in DNA repair and RecF pathway recombination.</text>
</comment>
<comment type="similarity">
    <text evidence="1">Belongs to the RecO family.</text>
</comment>
<accession>Q72AU1</accession>
<evidence type="ECO:0000255" key="1">
    <source>
        <dbReference type="HAMAP-Rule" id="MF_00201"/>
    </source>
</evidence>
<reference key="1">
    <citation type="journal article" date="2004" name="Nat. Biotechnol.">
        <title>The genome sequence of the anaerobic, sulfate-reducing bacterium Desulfovibrio vulgaris Hildenborough.</title>
        <authorList>
            <person name="Heidelberg J.F."/>
            <person name="Seshadri R."/>
            <person name="Haveman S.A."/>
            <person name="Hemme C.L."/>
            <person name="Paulsen I.T."/>
            <person name="Kolonay J.F."/>
            <person name="Eisen J.A."/>
            <person name="Ward N.L."/>
            <person name="Methe B.A."/>
            <person name="Brinkac L.M."/>
            <person name="Daugherty S.C."/>
            <person name="DeBoy R.T."/>
            <person name="Dodson R.J."/>
            <person name="Durkin A.S."/>
            <person name="Madupu R."/>
            <person name="Nelson W.C."/>
            <person name="Sullivan S.A."/>
            <person name="Fouts D.E."/>
            <person name="Haft D.H."/>
            <person name="Selengut J."/>
            <person name="Peterson J.D."/>
            <person name="Davidsen T.M."/>
            <person name="Zafar N."/>
            <person name="Zhou L."/>
            <person name="Radune D."/>
            <person name="Dimitrov G."/>
            <person name="Hance M."/>
            <person name="Tran K."/>
            <person name="Khouri H.M."/>
            <person name="Gill J."/>
            <person name="Utterback T.R."/>
            <person name="Feldblyum T.V."/>
            <person name="Wall J.D."/>
            <person name="Voordouw G."/>
            <person name="Fraser C.M."/>
        </authorList>
    </citation>
    <scope>NUCLEOTIDE SEQUENCE [LARGE SCALE GENOMIC DNA]</scope>
    <source>
        <strain>ATCC 29579 / DSM 644 / CCUG 34227 / NCIMB 8303 / VKM B-1760 / Hildenborough</strain>
    </source>
</reference>
<sequence>MDFTDQALVLRVGRFREADLWVRFLCRQRGIISAFAFGGCRSRRRFCGCLDIFNVVLMRVQGTRGGLYQSLQEATLLKGPDRLRRDWRRYGVAVNCLRFIEALGAGPDGADSAFTLTLEMLELLETVDVVPPLLPLLFRARFAFEQGYAPRFESCASCGEPFDGTAKDGGARFHVRDGVLYCGRCSAPTGATVAISRETLDALRFVQDNSPLRWSELCFSPTGRRECSRAVDGFIQYHIGLTWENGTFRRL</sequence>
<proteinExistence type="inferred from homology"/>
<gene>
    <name evidence="1" type="primary">recO</name>
    <name type="ordered locus">DVU_1899</name>
</gene>